<reference key="1">
    <citation type="journal article" date="2001" name="Lancet">
        <title>Whole genome sequencing of meticillin-resistant Staphylococcus aureus.</title>
        <authorList>
            <person name="Kuroda M."/>
            <person name="Ohta T."/>
            <person name="Uchiyama I."/>
            <person name="Baba T."/>
            <person name="Yuzawa H."/>
            <person name="Kobayashi I."/>
            <person name="Cui L."/>
            <person name="Oguchi A."/>
            <person name="Aoki K."/>
            <person name="Nagai Y."/>
            <person name="Lian J.-Q."/>
            <person name="Ito T."/>
            <person name="Kanamori M."/>
            <person name="Matsumaru H."/>
            <person name="Maruyama A."/>
            <person name="Murakami H."/>
            <person name="Hosoyama A."/>
            <person name="Mizutani-Ui Y."/>
            <person name="Takahashi N.K."/>
            <person name="Sawano T."/>
            <person name="Inoue R."/>
            <person name="Kaito C."/>
            <person name="Sekimizu K."/>
            <person name="Hirakawa H."/>
            <person name="Kuhara S."/>
            <person name="Goto S."/>
            <person name="Yabuzaki J."/>
            <person name="Kanehisa M."/>
            <person name="Yamashita A."/>
            <person name="Oshima K."/>
            <person name="Furuya K."/>
            <person name="Yoshino C."/>
            <person name="Shiba T."/>
            <person name="Hattori M."/>
            <person name="Ogasawara N."/>
            <person name="Hayashi H."/>
            <person name="Hiramatsu K."/>
        </authorList>
    </citation>
    <scope>NUCLEOTIDE SEQUENCE [LARGE SCALE GENOMIC DNA]</scope>
    <source>
        <strain>Mu50 / ATCC 700699</strain>
    </source>
</reference>
<comment type="function">
    <text evidence="1">Catalyzes the formation of UDP-glucose from glucose-1-phosphate and UTP. This is an intermediate step in the biosynthesis of diglucosyl-diacylglycerol (Glc2-DAG), i.e. the predominant glycolipid found in the S.aureus membrane, which is also used as a membrane anchor for lipoteichoic acid (LTA) (By similarity).</text>
</comment>
<comment type="catalytic activity">
    <reaction>
        <text>alpha-D-glucose 1-phosphate + UTP + H(+) = UDP-alpha-D-glucose + diphosphate</text>
        <dbReference type="Rhea" id="RHEA:19889"/>
        <dbReference type="ChEBI" id="CHEBI:15378"/>
        <dbReference type="ChEBI" id="CHEBI:33019"/>
        <dbReference type="ChEBI" id="CHEBI:46398"/>
        <dbReference type="ChEBI" id="CHEBI:58601"/>
        <dbReference type="ChEBI" id="CHEBI:58885"/>
        <dbReference type="EC" id="2.7.7.9"/>
    </reaction>
</comment>
<comment type="pathway">
    <text>Glycolipid metabolism; diglucosyl-diacylglycerol biosynthesis.</text>
</comment>
<comment type="similarity">
    <text evidence="2">Belongs to the UDPGP type 2 family.</text>
</comment>
<dbReference type="EC" id="2.7.7.9"/>
<dbReference type="EMBL" id="BA000017">
    <property type="protein sequence ID" value="BAB58662.1"/>
    <property type="molecule type" value="Genomic_DNA"/>
</dbReference>
<dbReference type="SMR" id="Q99RD4"/>
<dbReference type="KEGG" id="sav:SAV2500"/>
<dbReference type="HOGENOM" id="CLU_029499_1_2_9"/>
<dbReference type="PhylomeDB" id="Q99RD4"/>
<dbReference type="UniPathway" id="UPA00894"/>
<dbReference type="Proteomes" id="UP000002481">
    <property type="component" value="Chromosome"/>
</dbReference>
<dbReference type="GO" id="GO:0003983">
    <property type="term" value="F:UTP:glucose-1-phosphate uridylyltransferase activity"/>
    <property type="evidence" value="ECO:0007669"/>
    <property type="project" value="UniProtKB-EC"/>
</dbReference>
<dbReference type="GO" id="GO:0009246">
    <property type="term" value="P:enterobacterial common antigen biosynthetic process"/>
    <property type="evidence" value="ECO:0007669"/>
    <property type="project" value="UniProtKB-UniPathway"/>
</dbReference>
<dbReference type="GO" id="GO:0006011">
    <property type="term" value="P:UDP-alpha-D-glucose metabolic process"/>
    <property type="evidence" value="ECO:0007669"/>
    <property type="project" value="InterPro"/>
</dbReference>
<dbReference type="CDD" id="cd02541">
    <property type="entry name" value="UGPase_prokaryotic"/>
    <property type="match status" value="1"/>
</dbReference>
<dbReference type="Gene3D" id="3.90.550.10">
    <property type="entry name" value="Spore Coat Polysaccharide Biosynthesis Protein SpsA, Chain A"/>
    <property type="match status" value="1"/>
</dbReference>
<dbReference type="InterPro" id="IPR005771">
    <property type="entry name" value="GalU_uridylyltTrfase_bac/arc"/>
</dbReference>
<dbReference type="InterPro" id="IPR005835">
    <property type="entry name" value="NTP_transferase_dom"/>
</dbReference>
<dbReference type="InterPro" id="IPR029044">
    <property type="entry name" value="Nucleotide-diphossugar_trans"/>
</dbReference>
<dbReference type="NCBIfam" id="TIGR01099">
    <property type="entry name" value="galU"/>
    <property type="match status" value="1"/>
</dbReference>
<dbReference type="PANTHER" id="PTHR43197">
    <property type="entry name" value="UTP--GLUCOSE-1-PHOSPHATE URIDYLYLTRANSFERASE"/>
    <property type="match status" value="1"/>
</dbReference>
<dbReference type="PANTHER" id="PTHR43197:SF1">
    <property type="entry name" value="UTP--GLUCOSE-1-PHOSPHATE URIDYLYLTRANSFERASE"/>
    <property type="match status" value="1"/>
</dbReference>
<dbReference type="Pfam" id="PF00483">
    <property type="entry name" value="NTP_transferase"/>
    <property type="match status" value="1"/>
</dbReference>
<dbReference type="SUPFAM" id="SSF53448">
    <property type="entry name" value="Nucleotide-diphospho-sugar transferases"/>
    <property type="match status" value="1"/>
</dbReference>
<protein>
    <recommendedName>
        <fullName>UTP--glucose-1-phosphate uridylyltransferase</fullName>
        <ecNumber>2.7.7.9</ecNumber>
    </recommendedName>
    <alternativeName>
        <fullName>Alpha-D-glucosyl-1-phosphate uridylyltransferase</fullName>
    </alternativeName>
    <alternativeName>
        <fullName>UDP-glucose pyrophosphorylase</fullName>
        <shortName>UDPGP</shortName>
    </alternativeName>
    <alternativeName>
        <fullName>Uridine diphosphoglucose pyrophosphorylase</fullName>
    </alternativeName>
</protein>
<proteinExistence type="inferred from homology"/>
<evidence type="ECO:0000250" key="1"/>
<evidence type="ECO:0000305" key="2"/>
<feature type="chain" id="PRO_0000308305" description="UTP--glucose-1-phosphate uridylyltransferase">
    <location>
        <begin position="1"/>
        <end position="288"/>
    </location>
</feature>
<sequence>MKKIKKAIIPAAGLGTRFLPATKAMPKEMLPILDKPTIQYIVEEAARAGIEDIIIVTGRHKRAIEDHFDSQKELEMVLKEKGKSELLEKVQYSTELANIFYVRQKEQKGLGHAISSARQFIGNEPFAVLLGDDIVESEVPAVKQLIDVYEETGHSVIGVQEVPEADTHRYGIIDPLTKNGRQYEVKKFVEKPAQGTAPSNLAIMGRYVLTPEIFDYLKTQKEGAGNEIQLTDAIERMNNDNQVYAYDFEGERYDVGEKLGFVKTTIEYALKDDSMREELTRFIKALGL</sequence>
<keyword id="KW-0119">Carbohydrate metabolism</keyword>
<keyword id="KW-0548">Nucleotidyltransferase</keyword>
<keyword id="KW-0808">Transferase</keyword>
<name>GTAB_STAAM</name>
<gene>
    <name type="primary">gtaB</name>
    <name type="ordered locus">SAV2500</name>
</gene>
<organism>
    <name type="scientific">Staphylococcus aureus (strain Mu50 / ATCC 700699)</name>
    <dbReference type="NCBI Taxonomy" id="158878"/>
    <lineage>
        <taxon>Bacteria</taxon>
        <taxon>Bacillati</taxon>
        <taxon>Bacillota</taxon>
        <taxon>Bacilli</taxon>
        <taxon>Bacillales</taxon>
        <taxon>Staphylococcaceae</taxon>
        <taxon>Staphylococcus</taxon>
    </lineage>
</organism>
<accession>Q99RD4</accession>